<comment type="function">
    <text evidence="1">Responsible for the transport of dicarboxylates such as succinate, fumarate, and malate from the periplasm across the membrane.</text>
</comment>
<comment type="subcellular location">
    <subcellularLocation>
        <location evidence="1">Cell inner membrane</location>
        <topology evidence="1">Multi-pass membrane protein</topology>
    </subcellularLocation>
</comment>
<comment type="similarity">
    <text evidence="1">Belongs to the dicarboxylate/amino acid:cation symporter (DAACS) (TC 2.A.23) family.</text>
</comment>
<reference key="1">
    <citation type="submission" date="2009-07" db="EMBL/GenBank/DDBJ databases">
        <title>Complete sequence of Geobacter sp. M21.</title>
        <authorList>
            <consortium name="US DOE Joint Genome Institute"/>
            <person name="Lucas S."/>
            <person name="Copeland A."/>
            <person name="Lapidus A."/>
            <person name="Glavina del Rio T."/>
            <person name="Dalin E."/>
            <person name="Tice H."/>
            <person name="Bruce D."/>
            <person name="Goodwin L."/>
            <person name="Pitluck S."/>
            <person name="Saunders E."/>
            <person name="Brettin T."/>
            <person name="Detter J.C."/>
            <person name="Han C."/>
            <person name="Larimer F."/>
            <person name="Land M."/>
            <person name="Hauser L."/>
            <person name="Kyrpides N."/>
            <person name="Ovchinnikova G."/>
            <person name="Lovley D."/>
        </authorList>
    </citation>
    <scope>NUCLEOTIDE SEQUENCE [LARGE SCALE GENOMIC DNA]</scope>
    <source>
        <strain>M21</strain>
    </source>
</reference>
<dbReference type="EMBL" id="CP001661">
    <property type="protein sequence ID" value="ACT17100.1"/>
    <property type="molecule type" value="Genomic_DNA"/>
</dbReference>
<dbReference type="SMR" id="C6E2F4"/>
<dbReference type="STRING" id="443144.GM21_1039"/>
<dbReference type="KEGG" id="gem:GM21_1039"/>
<dbReference type="eggNOG" id="COG1301">
    <property type="taxonomic scope" value="Bacteria"/>
</dbReference>
<dbReference type="HOGENOM" id="CLU_019375_7_0_7"/>
<dbReference type="OrthoDB" id="9766690at2"/>
<dbReference type="GO" id="GO:0005886">
    <property type="term" value="C:plasma membrane"/>
    <property type="evidence" value="ECO:0007669"/>
    <property type="project" value="UniProtKB-SubCell"/>
</dbReference>
<dbReference type="GO" id="GO:0015138">
    <property type="term" value="F:fumarate transmembrane transporter activity"/>
    <property type="evidence" value="ECO:0007669"/>
    <property type="project" value="TreeGrafter"/>
</dbReference>
<dbReference type="GO" id="GO:0015366">
    <property type="term" value="F:malate:proton symporter activity"/>
    <property type="evidence" value="ECO:0007669"/>
    <property type="project" value="TreeGrafter"/>
</dbReference>
<dbReference type="GO" id="GO:0015141">
    <property type="term" value="F:succinate transmembrane transporter activity"/>
    <property type="evidence" value="ECO:0007669"/>
    <property type="project" value="TreeGrafter"/>
</dbReference>
<dbReference type="GO" id="GO:0070778">
    <property type="term" value="P:L-aspartate transmembrane transport"/>
    <property type="evidence" value="ECO:0007669"/>
    <property type="project" value="TreeGrafter"/>
</dbReference>
<dbReference type="FunFam" id="1.10.3860.10:FF:000001">
    <property type="entry name" value="C4-dicarboxylate transport protein"/>
    <property type="match status" value="1"/>
</dbReference>
<dbReference type="Gene3D" id="1.10.3860.10">
    <property type="entry name" value="Sodium:dicarboxylate symporter"/>
    <property type="match status" value="1"/>
</dbReference>
<dbReference type="HAMAP" id="MF_01300">
    <property type="entry name" value="C4_dicarb_transport"/>
    <property type="match status" value="1"/>
</dbReference>
<dbReference type="InterPro" id="IPR023954">
    <property type="entry name" value="C4_dicarb_transport"/>
</dbReference>
<dbReference type="InterPro" id="IPR001991">
    <property type="entry name" value="Na-dicarboxylate_symporter"/>
</dbReference>
<dbReference type="InterPro" id="IPR018107">
    <property type="entry name" value="Na-dicarboxylate_symporter_CS"/>
</dbReference>
<dbReference type="InterPro" id="IPR036458">
    <property type="entry name" value="Na:dicarbo_symporter_sf"/>
</dbReference>
<dbReference type="NCBIfam" id="NF002461">
    <property type="entry name" value="PRK01663.1"/>
    <property type="match status" value="1"/>
</dbReference>
<dbReference type="NCBIfam" id="NF009587">
    <property type="entry name" value="PRK13027.1"/>
    <property type="match status" value="1"/>
</dbReference>
<dbReference type="PANTHER" id="PTHR42865:SF1">
    <property type="entry name" value="AEROBIC C4-DICARBOXYLATE TRANSPORT PROTEIN"/>
    <property type="match status" value="1"/>
</dbReference>
<dbReference type="PANTHER" id="PTHR42865">
    <property type="entry name" value="PROTON/GLUTAMATE-ASPARTATE SYMPORTER"/>
    <property type="match status" value="1"/>
</dbReference>
<dbReference type="Pfam" id="PF00375">
    <property type="entry name" value="SDF"/>
    <property type="match status" value="1"/>
</dbReference>
<dbReference type="PRINTS" id="PR00173">
    <property type="entry name" value="EDTRNSPORT"/>
</dbReference>
<dbReference type="SUPFAM" id="SSF118215">
    <property type="entry name" value="Proton glutamate symport protein"/>
    <property type="match status" value="1"/>
</dbReference>
<dbReference type="PROSITE" id="PS00713">
    <property type="entry name" value="NA_DICARBOXYL_SYMP_1"/>
    <property type="match status" value="1"/>
</dbReference>
<dbReference type="PROSITE" id="PS00714">
    <property type="entry name" value="NA_DICARBOXYL_SYMP_2"/>
    <property type="match status" value="1"/>
</dbReference>
<feature type="chain" id="PRO_1000214242" description="C4-dicarboxylate transport protein">
    <location>
        <begin position="1"/>
        <end position="439"/>
    </location>
</feature>
<feature type="transmembrane region" description="Helical" evidence="1">
    <location>
        <begin position="9"/>
        <end position="29"/>
    </location>
</feature>
<feature type="transmembrane region" description="Helical" evidence="1">
    <location>
        <begin position="45"/>
        <end position="65"/>
    </location>
</feature>
<feature type="transmembrane region" description="Helical" evidence="1">
    <location>
        <begin position="80"/>
        <end position="100"/>
    </location>
</feature>
<feature type="transmembrane region" description="Helical" evidence="1">
    <location>
        <begin position="150"/>
        <end position="170"/>
    </location>
</feature>
<feature type="transmembrane region" description="Helical" evidence="1">
    <location>
        <begin position="186"/>
        <end position="206"/>
    </location>
</feature>
<feature type="transmembrane region" description="Helical" evidence="1">
    <location>
        <begin position="221"/>
        <end position="241"/>
    </location>
</feature>
<feature type="transmembrane region" description="Helical" evidence="1">
    <location>
        <begin position="291"/>
        <end position="311"/>
    </location>
</feature>
<feature type="transmembrane region" description="Helical" evidence="1">
    <location>
        <begin position="334"/>
        <end position="354"/>
    </location>
</feature>
<feature type="transmembrane region" description="Helical" evidence="1">
    <location>
        <begin position="357"/>
        <end position="377"/>
    </location>
</feature>
<proteinExistence type="inferred from homology"/>
<evidence type="ECO:0000255" key="1">
    <source>
        <dbReference type="HAMAP-Rule" id="MF_01300"/>
    </source>
</evidence>
<keyword id="KW-0997">Cell inner membrane</keyword>
<keyword id="KW-1003">Cell membrane</keyword>
<keyword id="KW-0472">Membrane</keyword>
<keyword id="KW-0769">Symport</keyword>
<keyword id="KW-0812">Transmembrane</keyword>
<keyword id="KW-1133">Transmembrane helix</keyword>
<keyword id="KW-0813">Transport</keyword>
<gene>
    <name evidence="1" type="primary">dctA</name>
    <name type="ordered locus">GM21_1039</name>
</gene>
<organism>
    <name type="scientific">Geobacter sp. (strain M21)</name>
    <dbReference type="NCBI Taxonomy" id="443144"/>
    <lineage>
        <taxon>Bacteria</taxon>
        <taxon>Pseudomonadati</taxon>
        <taxon>Thermodesulfobacteriota</taxon>
        <taxon>Desulfuromonadia</taxon>
        <taxon>Geobacterales</taxon>
        <taxon>Geobacteraceae</taxon>
        <taxon>Geobacter</taxon>
    </lineage>
</organism>
<accession>C6E2F4</accession>
<name>DCTA_GEOSM</name>
<protein>
    <recommendedName>
        <fullName evidence="1">C4-dicarboxylate transport protein</fullName>
    </recommendedName>
</protein>
<sequence length="439" mass="46604">MKTKKFYQHLYFQVLTAISFGVALGYYLPDTGTAMKPLGDGFIKMIKMIITPIIFCTVVTGIAGMDDMKKVGRVGGKALLYFEAVSTLALGIGLVVINIIQPGVGMNADVTKLDTKGLDTYTATAAKGHSFVDFVLGVIPNSVVDAFAKGEILQVLFFAILFGLALSAMGEKGKPVYRLIDEVAHAFFGVVNIIMKFAPIGAFGAMAFTIGKFGLGSLTKLGMLMGSFYLTCLLFVFVVLGTIGKLCGFNIFKFISYIKEELLIVLGTSSSESALPRMMAKLENLGCSKSVVGLVIPTGYSFNLDGTSIYLTMAAVFVAQATNTPLDLTQTLTILGVLMLTSKGAAGVTGSGFVTLAATFAAIPTIPVAGLALILGIDRFMSEARALTNLVGNGVATVVVSRWENELDVARMSQVLNKELDEADGEADLLMMDPEPEEA</sequence>